<dbReference type="EMBL" id="CP000653">
    <property type="protein sequence ID" value="ABP60979.1"/>
    <property type="molecule type" value="Genomic_DNA"/>
</dbReference>
<dbReference type="RefSeq" id="WP_012017693.1">
    <property type="nucleotide sequence ID" value="NC_009436.1"/>
</dbReference>
<dbReference type="SMR" id="A4WB99"/>
<dbReference type="STRING" id="399742.Ent638_2310"/>
<dbReference type="KEGG" id="ent:Ent638_2310"/>
<dbReference type="eggNOG" id="COG3012">
    <property type="taxonomic scope" value="Bacteria"/>
</dbReference>
<dbReference type="HOGENOM" id="CLU_099590_0_0_6"/>
<dbReference type="OrthoDB" id="21421at2"/>
<dbReference type="Proteomes" id="UP000000230">
    <property type="component" value="Chromosome"/>
</dbReference>
<dbReference type="Gene3D" id="3.10.450.50">
    <property type="match status" value="1"/>
</dbReference>
<dbReference type="HAMAP" id="MF_00612">
    <property type="entry name" value="UPF0225"/>
    <property type="match status" value="1"/>
</dbReference>
<dbReference type="InterPro" id="IPR032710">
    <property type="entry name" value="NTF2-like_dom_sf"/>
</dbReference>
<dbReference type="InterPro" id="IPR004027">
    <property type="entry name" value="SEC_C_motif"/>
</dbReference>
<dbReference type="InterPro" id="IPR023006">
    <property type="entry name" value="UPF0225"/>
</dbReference>
<dbReference type="InterPro" id="IPR048469">
    <property type="entry name" value="YchJ-like_M"/>
</dbReference>
<dbReference type="NCBIfam" id="NF002449">
    <property type="entry name" value="PRK01617.1"/>
    <property type="match status" value="1"/>
</dbReference>
<dbReference type="NCBIfam" id="NF002486">
    <property type="entry name" value="PRK01752.1"/>
    <property type="match status" value="1"/>
</dbReference>
<dbReference type="PANTHER" id="PTHR33747:SF1">
    <property type="entry name" value="ADENYLATE CYCLASE-ASSOCIATED CAP C-TERMINAL DOMAIN-CONTAINING PROTEIN"/>
    <property type="match status" value="1"/>
</dbReference>
<dbReference type="PANTHER" id="PTHR33747">
    <property type="entry name" value="UPF0225 PROTEIN SCO1677"/>
    <property type="match status" value="1"/>
</dbReference>
<dbReference type="Pfam" id="PF02810">
    <property type="entry name" value="SEC-C"/>
    <property type="match status" value="2"/>
</dbReference>
<dbReference type="Pfam" id="PF17775">
    <property type="entry name" value="YchJ_M-like"/>
    <property type="match status" value="1"/>
</dbReference>
<dbReference type="SUPFAM" id="SSF54427">
    <property type="entry name" value="NTF2-like"/>
    <property type="match status" value="1"/>
</dbReference>
<dbReference type="SUPFAM" id="SSF103642">
    <property type="entry name" value="Sec-C motif"/>
    <property type="match status" value="1"/>
</dbReference>
<protein>
    <recommendedName>
        <fullName evidence="1">UPF0225 protein Ent638_2310</fullName>
    </recommendedName>
</protein>
<reference key="1">
    <citation type="journal article" date="2010" name="PLoS Genet.">
        <title>Genome sequence of the plant growth promoting endophytic bacterium Enterobacter sp. 638.</title>
        <authorList>
            <person name="Taghavi S."/>
            <person name="van der Lelie D."/>
            <person name="Hoffman A."/>
            <person name="Zhang Y.B."/>
            <person name="Walla M.D."/>
            <person name="Vangronsveld J."/>
            <person name="Newman L."/>
            <person name="Monchy S."/>
        </authorList>
    </citation>
    <scope>NUCLEOTIDE SEQUENCE [LARGE SCALE GENOMIC DNA]</scope>
    <source>
        <strain>638</strain>
    </source>
</reference>
<evidence type="ECO:0000255" key="1">
    <source>
        <dbReference type="HAMAP-Rule" id="MF_00612"/>
    </source>
</evidence>
<name>Y2310_ENT38</name>
<gene>
    <name type="ordered locus">Ent638_2310</name>
</gene>
<feature type="chain" id="PRO_1000061298" description="UPF0225 protein Ent638_2310">
    <location>
        <begin position="1"/>
        <end position="152"/>
    </location>
</feature>
<comment type="similarity">
    <text evidence="1">Belongs to the UPF0225 family.</text>
</comment>
<accession>A4WB99</accession>
<organism>
    <name type="scientific">Enterobacter sp. (strain 638)</name>
    <dbReference type="NCBI Taxonomy" id="399742"/>
    <lineage>
        <taxon>Bacteria</taxon>
        <taxon>Pseudomonadati</taxon>
        <taxon>Pseudomonadota</taxon>
        <taxon>Gammaproteobacteria</taxon>
        <taxon>Enterobacterales</taxon>
        <taxon>Enterobacteriaceae</taxon>
        <taxon>Enterobacter</taxon>
    </lineage>
</organism>
<proteinExistence type="inferred from homology"/>
<sequence>MTQLCPCGSALEYSLCCQRYLSGDQLAPDPSHLMRSRYTAFVIKDADYLIKTWHPSCQAADFRQEIVSGFTNTQWQGLTIYETSIGQTAKEGFVSFVARFIEHDKPGAIIERSRFILEGGQWYYIDGTRPQFSRNDACPCGSGKKFKKCCGQ</sequence>